<protein>
    <recommendedName>
        <fullName>Isochorismatase domain-containing protein 2</fullName>
    </recommendedName>
</protein>
<feature type="chain" id="PRO_0000268676" description="Isochorismatase domain-containing protein 2">
    <location>
        <begin position="1"/>
        <end position="205"/>
    </location>
</feature>
<name>ISOC2_XENLA</name>
<sequence>MSSLRRIGKLGERSSVLFLCDMQEKFRKSIVFFPEIVSVAARMLQAAKKLEMPVIITEQHPKGLGPTVPELGADDLKKYTKTSFSMLTPEVEEELQSIPDLRSIVLCGIETQACIMSTALDLLDKGYDVHVVADACSSRSQVDRLFALSRMRQSGAFLTTSEGVLLQLLGDAKHPKFKEVQKIIMEPAPDSGLLSLFRGPNLFST</sequence>
<dbReference type="EMBL" id="BC087336">
    <property type="protein sequence ID" value="AAH87336.1"/>
    <property type="molecule type" value="mRNA"/>
</dbReference>
<dbReference type="RefSeq" id="NP_001088698.1">
    <property type="nucleotide sequence ID" value="NM_001095229.1"/>
</dbReference>
<dbReference type="RefSeq" id="XP_018082506.1">
    <property type="nucleotide sequence ID" value="XM_018227017.1"/>
</dbReference>
<dbReference type="SMR" id="Q5PQ71"/>
<dbReference type="DNASU" id="495962"/>
<dbReference type="GeneID" id="495962"/>
<dbReference type="KEGG" id="xla:495962"/>
<dbReference type="AGR" id="Xenbase:XB-GENE-946957"/>
<dbReference type="CTD" id="495962"/>
<dbReference type="Xenbase" id="XB-GENE-946957">
    <property type="gene designation" value="isoc2.S"/>
</dbReference>
<dbReference type="OrthoDB" id="269496at2759"/>
<dbReference type="Proteomes" id="UP000186698">
    <property type="component" value="Chromosome 7S"/>
</dbReference>
<dbReference type="Bgee" id="495962">
    <property type="expression patterns" value="Expressed in testis and 20 other cell types or tissues"/>
</dbReference>
<dbReference type="GO" id="GO:0005737">
    <property type="term" value="C:cytoplasm"/>
    <property type="evidence" value="ECO:0000318"/>
    <property type="project" value="GO_Central"/>
</dbReference>
<dbReference type="CDD" id="cd01012">
    <property type="entry name" value="YcaC_related"/>
    <property type="match status" value="1"/>
</dbReference>
<dbReference type="FunFam" id="3.40.50.850:FF:000001">
    <property type="entry name" value="Isochorismatase domain-containing protein 1"/>
    <property type="match status" value="1"/>
</dbReference>
<dbReference type="Gene3D" id="3.40.50.850">
    <property type="entry name" value="Isochorismatase-like"/>
    <property type="match status" value="1"/>
</dbReference>
<dbReference type="InterPro" id="IPR000868">
    <property type="entry name" value="Isochorismatase-like_dom"/>
</dbReference>
<dbReference type="InterPro" id="IPR036380">
    <property type="entry name" value="Isochorismatase-like_sf"/>
</dbReference>
<dbReference type="InterPro" id="IPR050993">
    <property type="entry name" value="Isochorismatase_domain"/>
</dbReference>
<dbReference type="PANTHER" id="PTHR14119">
    <property type="entry name" value="HYDROLASE"/>
    <property type="match status" value="1"/>
</dbReference>
<dbReference type="PANTHER" id="PTHR14119:SF3">
    <property type="entry name" value="ISOCHORISMATASE DOMAIN-CONTAINING PROTEIN 2"/>
    <property type="match status" value="1"/>
</dbReference>
<dbReference type="Pfam" id="PF00857">
    <property type="entry name" value="Isochorismatase"/>
    <property type="match status" value="1"/>
</dbReference>
<dbReference type="SUPFAM" id="SSF52499">
    <property type="entry name" value="Isochorismatase-like hydrolases"/>
    <property type="match status" value="1"/>
</dbReference>
<evidence type="ECO:0000305" key="1"/>
<gene>
    <name type="primary">isoc2</name>
</gene>
<comment type="similarity">
    <text evidence="1">Belongs to the isochorismatase family.</text>
</comment>
<organism>
    <name type="scientific">Xenopus laevis</name>
    <name type="common">African clawed frog</name>
    <dbReference type="NCBI Taxonomy" id="8355"/>
    <lineage>
        <taxon>Eukaryota</taxon>
        <taxon>Metazoa</taxon>
        <taxon>Chordata</taxon>
        <taxon>Craniata</taxon>
        <taxon>Vertebrata</taxon>
        <taxon>Euteleostomi</taxon>
        <taxon>Amphibia</taxon>
        <taxon>Batrachia</taxon>
        <taxon>Anura</taxon>
        <taxon>Pipoidea</taxon>
        <taxon>Pipidae</taxon>
        <taxon>Xenopodinae</taxon>
        <taxon>Xenopus</taxon>
        <taxon>Xenopus</taxon>
    </lineage>
</organism>
<accession>Q5PQ71</accession>
<reference key="1">
    <citation type="submission" date="2004-12" db="EMBL/GenBank/DDBJ databases">
        <authorList>
            <consortium name="NIH - Xenopus Gene Collection (XGC) project"/>
        </authorList>
    </citation>
    <scope>NUCLEOTIDE SEQUENCE [LARGE SCALE MRNA]</scope>
    <source>
        <tissue>Testis</tissue>
    </source>
</reference>
<keyword id="KW-1185">Reference proteome</keyword>
<proteinExistence type="evidence at transcript level"/>